<feature type="signal peptide" evidence="1">
    <location>
        <begin position="1"/>
        <end position="25"/>
    </location>
</feature>
<feature type="chain" id="PRO_0000018372" description="Non-specific lipid-transfer protein B">
    <location>
        <begin position="26"/>
        <end position="117"/>
    </location>
</feature>
<feature type="disulfide bond" evidence="1">
    <location>
        <begin position="29"/>
        <end position="76"/>
    </location>
</feature>
<feature type="disulfide bond" evidence="1">
    <location>
        <begin position="39"/>
        <end position="53"/>
    </location>
</feature>
<feature type="disulfide bond" evidence="1">
    <location>
        <begin position="54"/>
        <end position="99"/>
    </location>
</feature>
<feature type="disulfide bond" evidence="1">
    <location>
        <begin position="74"/>
        <end position="113"/>
    </location>
</feature>
<protein>
    <recommendedName>
        <fullName>Non-specific lipid-transfer protein B</fullName>
        <shortName>LTP B</shortName>
    </recommendedName>
    <alternativeName>
        <fullName>Wax-associated protein 9B</fullName>
    </alternativeName>
</protein>
<name>NLTPB_BRAOT</name>
<dbReference type="EMBL" id="L33905">
    <property type="protein sequence ID" value="AAA73946.1"/>
    <property type="molecule type" value="Genomic_DNA"/>
</dbReference>
<dbReference type="PIR" id="T14465">
    <property type="entry name" value="T14465"/>
</dbReference>
<dbReference type="SMR" id="Q42642"/>
<dbReference type="GO" id="GO:0008289">
    <property type="term" value="F:lipid binding"/>
    <property type="evidence" value="ECO:0007669"/>
    <property type="project" value="UniProtKB-KW"/>
</dbReference>
<dbReference type="GO" id="GO:0006869">
    <property type="term" value="P:lipid transport"/>
    <property type="evidence" value="ECO:0007669"/>
    <property type="project" value="InterPro"/>
</dbReference>
<dbReference type="CDD" id="cd01960">
    <property type="entry name" value="nsLTP1"/>
    <property type="match status" value="1"/>
</dbReference>
<dbReference type="FunFam" id="1.10.110.10:FF:000002">
    <property type="entry name" value="Non-specific lipid-transfer protein"/>
    <property type="match status" value="1"/>
</dbReference>
<dbReference type="Gene3D" id="1.10.110.10">
    <property type="entry name" value="Plant lipid-transfer and hydrophobic proteins"/>
    <property type="match status" value="1"/>
</dbReference>
<dbReference type="InterPro" id="IPR036312">
    <property type="entry name" value="Bifun_inhib/LTP/seed_sf"/>
</dbReference>
<dbReference type="InterPro" id="IPR016140">
    <property type="entry name" value="Bifunc_inhib/LTP/seed_store"/>
</dbReference>
<dbReference type="InterPro" id="IPR000528">
    <property type="entry name" value="Plant_nsLTP"/>
</dbReference>
<dbReference type="PANTHER" id="PTHR33076">
    <property type="entry name" value="NON-SPECIFIC LIPID-TRANSFER PROTEIN 2-RELATED"/>
    <property type="match status" value="1"/>
</dbReference>
<dbReference type="Pfam" id="PF00234">
    <property type="entry name" value="Tryp_alpha_amyl"/>
    <property type="match status" value="1"/>
</dbReference>
<dbReference type="PRINTS" id="PR00382">
    <property type="entry name" value="LIPIDTRNSFER"/>
</dbReference>
<dbReference type="SMART" id="SM00499">
    <property type="entry name" value="AAI"/>
    <property type="match status" value="1"/>
</dbReference>
<dbReference type="SUPFAM" id="SSF47699">
    <property type="entry name" value="Bifunctional inhibitor/lipid-transfer protein/seed storage 2S albumin"/>
    <property type="match status" value="1"/>
</dbReference>
<dbReference type="PROSITE" id="PS00597">
    <property type="entry name" value="PLANT_LTP"/>
    <property type="match status" value="1"/>
</dbReference>
<keyword id="KW-1015">Disulfide bond</keyword>
<keyword id="KW-0446">Lipid-binding</keyword>
<keyword id="KW-0732">Signal</keyword>
<keyword id="KW-0813">Transport</keyword>
<sequence length="117" mass="11873">MAGLVKLSCLVLACMIVAGPIATNAALSCGTVSGNLAACIGYLTQNGPLPRGCCTGVTNLNNMARTTPDRQQACRCLVGAANSFPTLNAARAAGLPKACGVNIPYKISKSTNCNSVR</sequence>
<proteinExistence type="inferred from homology"/>
<organism>
    <name type="scientific">Brassica oleracea var. italica</name>
    <name type="common">Broccoli</name>
    <dbReference type="NCBI Taxonomy" id="36774"/>
    <lineage>
        <taxon>Eukaryota</taxon>
        <taxon>Viridiplantae</taxon>
        <taxon>Streptophyta</taxon>
        <taxon>Embryophyta</taxon>
        <taxon>Tracheophyta</taxon>
        <taxon>Spermatophyta</taxon>
        <taxon>Magnoliopsida</taxon>
        <taxon>eudicotyledons</taxon>
        <taxon>Gunneridae</taxon>
        <taxon>Pentapetalae</taxon>
        <taxon>rosids</taxon>
        <taxon>malvids</taxon>
        <taxon>Brassicales</taxon>
        <taxon>Brassicaceae</taxon>
        <taxon>Brassiceae</taxon>
        <taxon>Brassica</taxon>
    </lineage>
</organism>
<evidence type="ECO:0000255" key="1"/>
<evidence type="ECO:0000305" key="2"/>
<comment type="function">
    <text>Plant non-specific lipid-transfer proteins transfer phospholipids as well as galactolipids across membranes. May play a role in wax or cutin deposition in the cell walls of expanding epidermal cells and certain secretory tissues.</text>
</comment>
<comment type="similarity">
    <text evidence="2">Belongs to the plant LTP family.</text>
</comment>
<reference key="1">
    <citation type="journal article" date="1995" name="Plant J.">
        <title>The gene for the major cuticular wax-associated protein and three homologous genes from broccoli (Brassica oleracea) and their expression patterns.</title>
        <authorList>
            <person name="Pyee J."/>
            <person name="Kolattukudy P.E."/>
        </authorList>
    </citation>
    <scope>NUCLEOTIDE SEQUENCE [GENOMIC DNA]</scope>
    <source>
        <tissue>Leaf</tissue>
    </source>
</reference>
<accession>Q42642</accession>
<gene>
    <name type="primary">WAX9B</name>
</gene>